<keyword id="KW-0378">Hydrolase</keyword>
<keyword id="KW-0460">Magnesium</keyword>
<keyword id="KW-0479">Metal-binding</keyword>
<keyword id="KW-1185">Reference proteome</keyword>
<dbReference type="EC" id="3.5.2.15" evidence="2 3"/>
<dbReference type="EMBL" id="CP002593">
    <property type="protein sequence ID" value="AEA25384.1"/>
    <property type="molecule type" value="Genomic_DNA"/>
</dbReference>
<dbReference type="RefSeq" id="WP_013675305.1">
    <property type="nucleotide sequence ID" value="NC_015312.1"/>
</dbReference>
<dbReference type="SMR" id="F4CUJ4"/>
<dbReference type="STRING" id="675635.Psed_3188"/>
<dbReference type="KEGG" id="pdx:Psed_3188"/>
<dbReference type="eggNOG" id="ENOG502Z8BS">
    <property type="taxonomic scope" value="Bacteria"/>
</dbReference>
<dbReference type="HOGENOM" id="CLU_808206_0_0_11"/>
<dbReference type="OrthoDB" id="569708at2"/>
<dbReference type="SABIO-RK" id="F4CUJ4"/>
<dbReference type="UniPathway" id="UPA00008">
    <property type="reaction ID" value="UER00502"/>
</dbReference>
<dbReference type="Proteomes" id="UP000007809">
    <property type="component" value="Chromosome"/>
</dbReference>
<dbReference type="GO" id="GO:0018753">
    <property type="term" value="F:cyanuric acid amidohydrolase activity"/>
    <property type="evidence" value="ECO:0007669"/>
    <property type="project" value="UniProtKB-UniRule"/>
</dbReference>
<dbReference type="GO" id="GO:0046872">
    <property type="term" value="F:metal ion binding"/>
    <property type="evidence" value="ECO:0007669"/>
    <property type="project" value="UniProtKB-UniRule"/>
</dbReference>
<dbReference type="GO" id="GO:0019381">
    <property type="term" value="P:atrazine catabolic process"/>
    <property type="evidence" value="ECO:0007669"/>
    <property type="project" value="UniProtKB-UniRule"/>
</dbReference>
<dbReference type="Gene3D" id="3.30.1330.160">
    <property type="entry name" value="Cyanuric acid hydrolase/Barbituras, RU C"/>
    <property type="match status" value="1"/>
</dbReference>
<dbReference type="Gene3D" id="3.30.1330.170">
    <property type="entry name" value="Cyanuric acid hydrolase/Barbiturase, RU A"/>
    <property type="match status" value="1"/>
</dbReference>
<dbReference type="Gene3D" id="3.30.1330.180">
    <property type="entry name" value="Cyanuric acid hydrolase/Barbiturase, RU B"/>
    <property type="match status" value="1"/>
</dbReference>
<dbReference type="HAMAP" id="MF_01989">
    <property type="entry name" value="Cyc_amidohydrol"/>
    <property type="match status" value="1"/>
</dbReference>
<dbReference type="InterPro" id="IPR014086">
    <property type="entry name" value="AtzD/Barbiturase"/>
</dbReference>
<dbReference type="InterPro" id="IPR043008">
    <property type="entry name" value="AtzD/Barbiturase_RUA"/>
</dbReference>
<dbReference type="InterPro" id="IPR043006">
    <property type="entry name" value="AtzD/Barbiturase_RUB"/>
</dbReference>
<dbReference type="InterPro" id="IPR043007">
    <property type="entry name" value="AtzD/Barbiturase_RUC"/>
</dbReference>
<dbReference type="NCBIfam" id="TIGR02714">
    <property type="entry name" value="amido_AtzD_TrzD"/>
    <property type="match status" value="1"/>
</dbReference>
<dbReference type="Pfam" id="PF09663">
    <property type="entry name" value="Amido_AtzD_TrzD"/>
    <property type="match status" value="1"/>
</dbReference>
<gene>
    <name type="ordered locus">Psed_3188</name>
</gene>
<feature type="chain" id="PRO_0000439917" description="Cyanuric acid amidohydrolase">
    <location>
        <begin position="1"/>
        <end position="344"/>
    </location>
</feature>
<feature type="region of interest" description="RU A" evidence="2">
    <location>
        <begin position="1"/>
        <end position="91"/>
    </location>
</feature>
<feature type="region of interest" description="RU B" evidence="2">
    <location>
        <begin position="97"/>
        <end position="232"/>
    </location>
</feature>
<feature type="region of interest" description="RU C" evidence="2">
    <location>
        <begin position="238"/>
        <end position="344"/>
    </location>
</feature>
<feature type="active site" evidence="2">
    <location>
        <position position="146"/>
    </location>
</feature>
<feature type="active site" description="Nucleophile" evidence="2">
    <location>
        <position position="215"/>
    </location>
</feature>
<feature type="binding site" evidence="2">
    <location>
        <position position="51"/>
    </location>
    <ligand>
        <name>substrate</name>
    </ligand>
</feature>
<feature type="binding site" evidence="2">
    <location>
        <begin position="71"/>
        <end position="72"/>
    </location>
    <ligand>
        <name>substrate</name>
    </ligand>
</feature>
<feature type="binding site" evidence="2">
    <location>
        <position position="178"/>
    </location>
    <ligand>
        <name>substrate</name>
    </ligand>
</feature>
<feature type="binding site" evidence="2">
    <location>
        <begin position="215"/>
        <end position="216"/>
    </location>
    <ligand>
        <name>substrate</name>
    </ligand>
</feature>
<feature type="binding site" evidence="2">
    <location>
        <position position="276"/>
    </location>
    <ligand>
        <name>Mg(2+)</name>
        <dbReference type="ChEBI" id="CHEBI:18420"/>
        <note>structural</note>
    </ligand>
</feature>
<feature type="binding site" evidence="2">
    <location>
        <position position="303"/>
    </location>
    <ligand>
        <name>substrate</name>
    </ligand>
</feature>
<feature type="binding site" evidence="2">
    <location>
        <begin position="322"/>
        <end position="323"/>
    </location>
    <ligand>
        <name>substrate</name>
    </ligand>
</feature>
<feature type="binding site" evidence="2">
    <location>
        <position position="325"/>
    </location>
    <ligand>
        <name>Mg(2+)</name>
        <dbReference type="ChEBI" id="CHEBI:18420"/>
        <note>structural</note>
    </ligand>
</feature>
<feature type="binding site" evidence="2">
    <location>
        <position position="328"/>
    </location>
    <ligand>
        <name>Mg(2+)</name>
        <dbReference type="ChEBI" id="CHEBI:18420"/>
        <note>structural</note>
    </ligand>
</feature>
<feature type="binding site" evidence="2">
    <location>
        <position position="329"/>
    </location>
    <ligand>
        <name>Mg(2+)</name>
        <dbReference type="ChEBI" id="CHEBI:18420"/>
        <note>structural</note>
    </ligand>
</feature>
<feature type="binding site" evidence="2">
    <location>
        <position position="330"/>
    </location>
    <ligand>
        <name>Mg(2+)</name>
        <dbReference type="ChEBI" id="CHEBI:18420"/>
        <note>structural</note>
    </ligand>
</feature>
<feature type="binding site" evidence="2">
    <location>
        <position position="333"/>
    </location>
    <ligand>
        <name>Mg(2+)</name>
        <dbReference type="ChEBI" id="CHEBI:18420"/>
        <note>structural</note>
    </ligand>
</feature>
<feature type="site" description="Important for substrate specificity" evidence="2">
    <location>
        <position position="299"/>
    </location>
</feature>
<organism>
    <name type="scientific">Pseudonocardia dioxanivorans (strain ATCC 55486 / DSM 44775 / JCM 13855 / CB1190)</name>
    <dbReference type="NCBI Taxonomy" id="675635"/>
    <lineage>
        <taxon>Bacteria</taxon>
        <taxon>Bacillati</taxon>
        <taxon>Actinomycetota</taxon>
        <taxon>Actinomycetes</taxon>
        <taxon>Pseudonocardiales</taxon>
        <taxon>Pseudonocardiaceae</taxon>
        <taxon>Pseudonocardia</taxon>
    </lineage>
</organism>
<evidence type="ECO:0000250" key="1">
    <source>
        <dbReference type="UniProtKB" id="P58329"/>
    </source>
</evidence>
<evidence type="ECO:0000255" key="2">
    <source>
        <dbReference type="HAMAP-Rule" id="MF_01989"/>
    </source>
</evidence>
<evidence type="ECO:0000269" key="3">
    <source>
    </source>
</evidence>
<evidence type="ECO:0000305" key="4"/>
<accession>F4CUJ4</accession>
<reference key="1">
    <citation type="journal article" date="2011" name="J. Bacteriol.">
        <title>Genome sequence of the 1,4-dioxane-degrading Pseudonocardia dioxanivorans strain CB1190.</title>
        <authorList>
            <person name="Sales C.M."/>
            <person name="Mahendra S."/>
            <person name="Grostern A."/>
            <person name="Parales R.E."/>
            <person name="Goodwin L.A."/>
            <person name="Woyke T."/>
            <person name="Nolan M."/>
            <person name="Lapidus A."/>
            <person name="Chertkov O."/>
            <person name="Ovchinnikova G."/>
            <person name="Sczyrba A."/>
            <person name="Alvarez-Cohen L."/>
        </authorList>
    </citation>
    <scope>NUCLEOTIDE SEQUENCE [LARGE SCALE GENOMIC DNA]</scope>
    <source>
        <strain>ATCC 55486 / DSM 44775 / JCM 13855 / CB1190</strain>
    </source>
</reference>
<reference key="2">
    <citation type="journal article" date="2017" name="Appl. Environ. Microbiol.">
        <title>High resolution X-ray structures of two functionally distinct members of the cyclic amide hydrolase (CyAH) family of Toblerone fold enzymes.</title>
        <authorList>
            <person name="Peat T.S."/>
            <person name="Balotra S."/>
            <person name="Wilding M."/>
            <person name="Hartley C.J."/>
            <person name="Newman J."/>
            <person name="Scott C."/>
        </authorList>
    </citation>
    <scope>FUNCTION</scope>
    <scope>CATALYTIC ACTIVITY</scope>
    <scope>BIOPHYSICOCHEMICAL PROPERTIES</scope>
</reference>
<protein>
    <recommendedName>
        <fullName evidence="2">Cyanuric acid amidohydrolase</fullName>
        <shortName evidence="2">CAH</shortName>
        <ecNumber evidence="2 3">3.5.2.15</ecNumber>
    </recommendedName>
</protein>
<sequence length="344" mass="34847">MTVVDIVKRTTSSPDDTALVKTLADAGYSTADVVALVAKTEGNGCVNDFSRTLADHTWDAVLPADAVTVFSGGTEGVLSPHASAFVGTDRPAAPEGALVAAVGRTASIPIADLGRAGQVRAVAARVRELCADAALEPGDVHLVLVKCPLLTTESISRCLADGVEPATRDTLRSMAMSRAASALGVAVALGEISEPDAAAALRGEADVWSSVASISSGAELDDCHILVLGNSPAAHGPLRAVHGVMRDAMDARTVLDLLDRVSADGGEVVQVLAKAEADPSGSIRGRRHTMLTDSDLSSTRHARAAVGGLLAGLVGDSAIYVSGGAEHQGPPGGGPVTVVYRVAS</sequence>
<proteinExistence type="evidence at protein level"/>
<comment type="function">
    <text evidence="2 3">Responsible for the hydrolysis of cyanuric acid, an intermediate formed during catabolism of s-triazine based compounds in herbicides such as atrazine and polymers such as melamine. Catalyzes the hydrolytic opening of the s-triazine ring of cyanuric acid (2,4,6-trihydroxy-s-triazine) to yield carbon dioxide and carboxybiuret, which spontaneously decarboxylates to biuret.</text>
</comment>
<comment type="catalytic activity">
    <reaction evidence="2 3">
        <text>cyanurate + H2O = 1-carboxybiuret + H(+)</text>
        <dbReference type="Rhea" id="RHEA:70363"/>
        <dbReference type="ChEBI" id="CHEBI:15377"/>
        <dbReference type="ChEBI" id="CHEBI:15378"/>
        <dbReference type="ChEBI" id="CHEBI:38028"/>
        <dbReference type="ChEBI" id="CHEBI:142864"/>
        <dbReference type="EC" id="3.5.2.15"/>
    </reaction>
</comment>
<comment type="activity regulation">
    <text evidence="1 2">Inhibited by barbituric acid.</text>
</comment>
<comment type="biophysicochemical properties">
    <kinetics>
        <KM evidence="3">176 uM for cyanuric acid</KM>
        <text evidence="3">kcat is 56.3 sec(-1) with cyanuric acid as substrate.</text>
    </kinetics>
</comment>
<comment type="pathway">
    <text evidence="2">Xenobiotic degradation; atrazine degradation; biuret from cyanurate: step 1/1.</text>
</comment>
<comment type="subunit">
    <text evidence="1 2">Homotetramer.</text>
</comment>
<comment type="domain">
    <text evidence="2">The monomer structure is formed from three repeating units (RUs) that share the same structure as one another. The monomer, the active site and substrate all possess threefold rotational symmetry, to the extent that the active site possesses three potential Ser-Lys catalytic dyads. It is possible that any or all of the three active-site serines may act as nucleophile (albeit only one can do so per catalytic cycle).</text>
</comment>
<comment type="similarity">
    <text evidence="2 4">Belongs to the cyclic amide hydrolase (CyAH) family.</text>
</comment>
<name>CAH_PSEUX</name>